<comment type="function">
    <text evidence="1">Bidirectionally degrades single-stranded DNA into large acid-insoluble oligonucleotides, which are then degraded further into small acid-soluble oligonucleotides.</text>
</comment>
<comment type="catalytic activity">
    <reaction evidence="1">
        <text>Exonucleolytic cleavage in either 5'- to 3'- or 3'- to 5'-direction to yield nucleoside 5'-phosphates.</text>
        <dbReference type="EC" id="3.1.11.6"/>
    </reaction>
</comment>
<comment type="subunit">
    <text evidence="1">Heterooligomer composed of large and small subunits.</text>
</comment>
<comment type="subcellular location">
    <subcellularLocation>
        <location evidence="1">Cytoplasm</location>
    </subcellularLocation>
</comment>
<comment type="similarity">
    <text evidence="1">Belongs to the XseB family.</text>
</comment>
<protein>
    <recommendedName>
        <fullName evidence="1">Exodeoxyribonuclease 7 small subunit</fullName>
        <ecNumber evidence="1">3.1.11.6</ecNumber>
    </recommendedName>
    <alternativeName>
        <fullName evidence="1">Exodeoxyribonuclease VII small subunit</fullName>
        <shortName evidence="1">Exonuclease VII small subunit</shortName>
    </alternativeName>
</protein>
<feature type="chain" id="PRO_0000206938" description="Exodeoxyribonuclease 7 small subunit">
    <location>
        <begin position="1"/>
        <end position="77"/>
    </location>
</feature>
<gene>
    <name evidence="1" type="primary">xseB</name>
    <name type="ordered locus">CV_2690</name>
</gene>
<sequence length="77" mass="8324">MAKAAKAPASFETALAQLEDIIQAMDSGDMPLETALASYKQGTELIKFCQGKLADAEQQLKILENNELKTLDLPNGQ</sequence>
<accession>Q7NUK7</accession>
<keyword id="KW-0963">Cytoplasm</keyword>
<keyword id="KW-0269">Exonuclease</keyword>
<keyword id="KW-0378">Hydrolase</keyword>
<keyword id="KW-0540">Nuclease</keyword>
<keyword id="KW-1185">Reference proteome</keyword>
<organism>
    <name type="scientific">Chromobacterium violaceum (strain ATCC 12472 / DSM 30191 / JCM 1249 / CCUG 213 / NBRC 12614 / NCIMB 9131 / NCTC 9757 / MK)</name>
    <dbReference type="NCBI Taxonomy" id="243365"/>
    <lineage>
        <taxon>Bacteria</taxon>
        <taxon>Pseudomonadati</taxon>
        <taxon>Pseudomonadota</taxon>
        <taxon>Betaproteobacteria</taxon>
        <taxon>Neisseriales</taxon>
        <taxon>Chromobacteriaceae</taxon>
        <taxon>Chromobacterium</taxon>
    </lineage>
</organism>
<reference key="1">
    <citation type="journal article" date="2003" name="Proc. Natl. Acad. Sci. U.S.A.">
        <title>The complete genome sequence of Chromobacterium violaceum reveals remarkable and exploitable bacterial adaptability.</title>
        <authorList>
            <person name="Vasconcelos A.T.R."/>
            <person name="de Almeida D.F."/>
            <person name="Hungria M."/>
            <person name="Guimaraes C.T."/>
            <person name="Antonio R.V."/>
            <person name="Almeida F.C."/>
            <person name="de Almeida L.G.P."/>
            <person name="de Almeida R."/>
            <person name="Alves-Gomes J.A."/>
            <person name="Andrade E.M."/>
            <person name="Araripe J."/>
            <person name="de Araujo M.F.F."/>
            <person name="Astolfi-Filho S."/>
            <person name="Azevedo V."/>
            <person name="Baptista A.J."/>
            <person name="Bataus L.A.M."/>
            <person name="Batista J.S."/>
            <person name="Belo A."/>
            <person name="van den Berg C."/>
            <person name="Bogo M."/>
            <person name="Bonatto S."/>
            <person name="Bordignon J."/>
            <person name="Brigido M.M."/>
            <person name="Brito C.A."/>
            <person name="Brocchi M."/>
            <person name="Burity H.A."/>
            <person name="Camargo A.A."/>
            <person name="Cardoso D.D.P."/>
            <person name="Carneiro N.P."/>
            <person name="Carraro D.M."/>
            <person name="Carvalho C.M.B."/>
            <person name="Cascardo J.C.M."/>
            <person name="Cavada B.S."/>
            <person name="Chueire L.M.O."/>
            <person name="Creczynski-Pasa T.B."/>
            <person name="Cunha-Junior N.C."/>
            <person name="Fagundes N."/>
            <person name="Falcao C.L."/>
            <person name="Fantinatti F."/>
            <person name="Farias I.P."/>
            <person name="Felipe M.S.S."/>
            <person name="Ferrari L.P."/>
            <person name="Ferro J.A."/>
            <person name="Ferro M.I.T."/>
            <person name="Franco G.R."/>
            <person name="Freitas N.S.A."/>
            <person name="Furlan L.R."/>
            <person name="Gazzinelli R.T."/>
            <person name="Gomes E.A."/>
            <person name="Goncalves P.R."/>
            <person name="Grangeiro T.B."/>
            <person name="Grattapaglia D."/>
            <person name="Grisard E.C."/>
            <person name="Hanna E.S."/>
            <person name="Jardim S.N."/>
            <person name="Laurino J."/>
            <person name="Leoi L.C.T."/>
            <person name="Lima L.F.A."/>
            <person name="Loureiro M.F."/>
            <person name="Lyra M.C.C.P."/>
            <person name="Madeira H.M.F."/>
            <person name="Manfio G.P."/>
            <person name="Maranhao A.Q."/>
            <person name="Martins W.S."/>
            <person name="di Mauro S.M.Z."/>
            <person name="de Medeiros S.R.B."/>
            <person name="Meissner R.V."/>
            <person name="Moreira M.A.M."/>
            <person name="Nascimento F.F."/>
            <person name="Nicolas M.F."/>
            <person name="Oliveira J.G."/>
            <person name="Oliveira S.C."/>
            <person name="Paixao R.F.C."/>
            <person name="Parente J.A."/>
            <person name="Pedrosa F.O."/>
            <person name="Pena S.D.J."/>
            <person name="Pereira J.O."/>
            <person name="Pereira M."/>
            <person name="Pinto L.S.R.C."/>
            <person name="Pinto L.S."/>
            <person name="Porto J.I.R."/>
            <person name="Potrich D.P."/>
            <person name="Ramalho-Neto C.E."/>
            <person name="Reis A.M.M."/>
            <person name="Rigo L.U."/>
            <person name="Rondinelli E."/>
            <person name="Santos E.B.P."/>
            <person name="Santos F.R."/>
            <person name="Schneider M.P.C."/>
            <person name="Seuanez H.N."/>
            <person name="Silva A.M.R."/>
            <person name="da Silva A.L.C."/>
            <person name="Silva D.W."/>
            <person name="Silva R."/>
            <person name="Simoes I.C."/>
            <person name="Simon D."/>
            <person name="Soares C.M.A."/>
            <person name="Soares R.B.A."/>
            <person name="Souza E.M."/>
            <person name="Souza K.R.L."/>
            <person name="Souza R.C."/>
            <person name="Steffens M.B.R."/>
            <person name="Steindel M."/>
            <person name="Teixeira S.R."/>
            <person name="Urmenyi T."/>
            <person name="Vettore A."/>
            <person name="Wassem R."/>
            <person name="Zaha A."/>
            <person name="Simpson A.J.G."/>
        </authorList>
    </citation>
    <scope>NUCLEOTIDE SEQUENCE [LARGE SCALE GENOMIC DNA]</scope>
    <source>
        <strain>ATCC 12472 / DSM 30191 / JCM 1249 / CCUG 213 / NBRC 12614 / NCIMB 9131 / NCTC 9757 / MK</strain>
    </source>
</reference>
<proteinExistence type="inferred from homology"/>
<name>EX7S_CHRVO</name>
<evidence type="ECO:0000255" key="1">
    <source>
        <dbReference type="HAMAP-Rule" id="MF_00337"/>
    </source>
</evidence>
<dbReference type="EC" id="3.1.11.6" evidence="1"/>
<dbReference type="EMBL" id="AE016825">
    <property type="protein sequence ID" value="AAQ60360.1"/>
    <property type="molecule type" value="Genomic_DNA"/>
</dbReference>
<dbReference type="RefSeq" id="WP_011136237.1">
    <property type="nucleotide sequence ID" value="NC_005085.1"/>
</dbReference>
<dbReference type="SMR" id="Q7NUK7"/>
<dbReference type="STRING" id="243365.CV_2690"/>
<dbReference type="GeneID" id="66368403"/>
<dbReference type="KEGG" id="cvi:CV_2690"/>
<dbReference type="eggNOG" id="COG1722">
    <property type="taxonomic scope" value="Bacteria"/>
</dbReference>
<dbReference type="HOGENOM" id="CLU_145918_2_0_4"/>
<dbReference type="OrthoDB" id="287668at2"/>
<dbReference type="Proteomes" id="UP000001424">
    <property type="component" value="Chromosome"/>
</dbReference>
<dbReference type="GO" id="GO:0005829">
    <property type="term" value="C:cytosol"/>
    <property type="evidence" value="ECO:0007669"/>
    <property type="project" value="TreeGrafter"/>
</dbReference>
<dbReference type="GO" id="GO:0009318">
    <property type="term" value="C:exodeoxyribonuclease VII complex"/>
    <property type="evidence" value="ECO:0007669"/>
    <property type="project" value="InterPro"/>
</dbReference>
<dbReference type="GO" id="GO:0008855">
    <property type="term" value="F:exodeoxyribonuclease VII activity"/>
    <property type="evidence" value="ECO:0007669"/>
    <property type="project" value="UniProtKB-UniRule"/>
</dbReference>
<dbReference type="GO" id="GO:0006308">
    <property type="term" value="P:DNA catabolic process"/>
    <property type="evidence" value="ECO:0007669"/>
    <property type="project" value="UniProtKB-UniRule"/>
</dbReference>
<dbReference type="Gene3D" id="1.10.287.1040">
    <property type="entry name" value="Exonuclease VII, small subunit"/>
    <property type="match status" value="1"/>
</dbReference>
<dbReference type="HAMAP" id="MF_00337">
    <property type="entry name" value="Exonuc_7_S"/>
    <property type="match status" value="1"/>
</dbReference>
<dbReference type="InterPro" id="IPR003761">
    <property type="entry name" value="Exonuc_VII_S"/>
</dbReference>
<dbReference type="InterPro" id="IPR037004">
    <property type="entry name" value="Exonuc_VII_ssu_sf"/>
</dbReference>
<dbReference type="NCBIfam" id="NF002141">
    <property type="entry name" value="PRK00977.1-5"/>
    <property type="match status" value="1"/>
</dbReference>
<dbReference type="NCBIfam" id="TIGR01280">
    <property type="entry name" value="xseB"/>
    <property type="match status" value="1"/>
</dbReference>
<dbReference type="PANTHER" id="PTHR34137">
    <property type="entry name" value="EXODEOXYRIBONUCLEASE 7 SMALL SUBUNIT"/>
    <property type="match status" value="1"/>
</dbReference>
<dbReference type="PANTHER" id="PTHR34137:SF1">
    <property type="entry name" value="EXODEOXYRIBONUCLEASE 7 SMALL SUBUNIT"/>
    <property type="match status" value="1"/>
</dbReference>
<dbReference type="Pfam" id="PF02609">
    <property type="entry name" value="Exonuc_VII_S"/>
    <property type="match status" value="1"/>
</dbReference>
<dbReference type="PIRSF" id="PIRSF006488">
    <property type="entry name" value="Exonuc_VII_S"/>
    <property type="match status" value="1"/>
</dbReference>
<dbReference type="SUPFAM" id="SSF116842">
    <property type="entry name" value="XseB-like"/>
    <property type="match status" value="1"/>
</dbReference>